<proteinExistence type="inferred from homology"/>
<organism>
    <name type="scientific">Salmonella heidelberg (strain SL476)</name>
    <dbReference type="NCBI Taxonomy" id="454169"/>
    <lineage>
        <taxon>Bacteria</taxon>
        <taxon>Pseudomonadati</taxon>
        <taxon>Pseudomonadota</taxon>
        <taxon>Gammaproteobacteria</taxon>
        <taxon>Enterobacterales</taxon>
        <taxon>Enterobacteriaceae</taxon>
        <taxon>Salmonella</taxon>
    </lineage>
</organism>
<reference key="1">
    <citation type="journal article" date="2011" name="J. Bacteriol.">
        <title>Comparative genomics of 28 Salmonella enterica isolates: evidence for CRISPR-mediated adaptive sublineage evolution.</title>
        <authorList>
            <person name="Fricke W.F."/>
            <person name="Mammel M.K."/>
            <person name="McDermott P.F."/>
            <person name="Tartera C."/>
            <person name="White D.G."/>
            <person name="Leclerc J.E."/>
            <person name="Ravel J."/>
            <person name="Cebula T.A."/>
        </authorList>
    </citation>
    <scope>NUCLEOTIDE SEQUENCE [LARGE SCALE GENOMIC DNA]</scope>
    <source>
        <strain>SL476</strain>
    </source>
</reference>
<accession>B4T8P4</accession>
<protein>
    <recommendedName>
        <fullName evidence="1">S-adenosylmethionine:tRNA ribosyltransferase-isomerase</fullName>
        <ecNumber evidence="1">2.4.99.17</ecNumber>
    </recommendedName>
    <alternativeName>
        <fullName evidence="1">Queuosine biosynthesis protein QueA</fullName>
    </alternativeName>
</protein>
<gene>
    <name evidence="1" type="primary">queA</name>
    <name type="ordered locus">SeHA_C0504</name>
</gene>
<sequence>MRVTDFSFELPESLIAHYPQPERSRCRLLSLEGPTGALTHGTFTDLLDKLNPGDLLVFNNTRVIPARLFGRKASGGKIEVLVERMLDDKRILAHIRASKAPKPGTELLLGDDESIHATMTARHGALFEVEFNDPRPVLDILNAIGHMPLPPYIDRPDEDADRELYQTVYSEKPGAVAAPTAGLHFDEPLLAALREKGVEMAFVTLHVGAGTFQPVRVDTIEDHIMHSEYAEVPQEVVDAVLAAKARGNRVIAVGTTSVRSLESAAQAAKSDLIEPFFGDTQIFIYPGYQYKVIDALITNFHLPESTLIMLVSAFAGYQHTMNAYKTAVEQKYRFFSYGDAMFITYNPQAISERP</sequence>
<name>QUEA_SALHS</name>
<feature type="chain" id="PRO_1000094813" description="S-adenosylmethionine:tRNA ribosyltransferase-isomerase">
    <location>
        <begin position="1"/>
        <end position="354"/>
    </location>
</feature>
<dbReference type="EC" id="2.4.99.17" evidence="1"/>
<dbReference type="EMBL" id="CP001120">
    <property type="protein sequence ID" value="ACF68315.1"/>
    <property type="molecule type" value="Genomic_DNA"/>
</dbReference>
<dbReference type="RefSeq" id="WP_001266530.1">
    <property type="nucleotide sequence ID" value="NC_011083.1"/>
</dbReference>
<dbReference type="SMR" id="B4T8P4"/>
<dbReference type="KEGG" id="seh:SeHA_C0504"/>
<dbReference type="HOGENOM" id="CLU_039110_1_0_6"/>
<dbReference type="UniPathway" id="UPA00392"/>
<dbReference type="Proteomes" id="UP000001866">
    <property type="component" value="Chromosome"/>
</dbReference>
<dbReference type="GO" id="GO:0005737">
    <property type="term" value="C:cytoplasm"/>
    <property type="evidence" value="ECO:0007669"/>
    <property type="project" value="UniProtKB-SubCell"/>
</dbReference>
<dbReference type="GO" id="GO:0051075">
    <property type="term" value="F:S-adenosylmethionine:tRNA ribosyltransferase-isomerase activity"/>
    <property type="evidence" value="ECO:0007669"/>
    <property type="project" value="UniProtKB-EC"/>
</dbReference>
<dbReference type="GO" id="GO:0008616">
    <property type="term" value="P:queuosine biosynthetic process"/>
    <property type="evidence" value="ECO:0007669"/>
    <property type="project" value="UniProtKB-UniRule"/>
</dbReference>
<dbReference type="GO" id="GO:0002099">
    <property type="term" value="P:tRNA wobble guanine modification"/>
    <property type="evidence" value="ECO:0007669"/>
    <property type="project" value="TreeGrafter"/>
</dbReference>
<dbReference type="FunFam" id="2.40.10.240:FF:000001">
    <property type="entry name" value="S-adenosylmethionine:tRNA ribosyltransferase-isomerase"/>
    <property type="match status" value="1"/>
</dbReference>
<dbReference type="FunFam" id="3.40.1780.10:FF:000001">
    <property type="entry name" value="S-adenosylmethionine:tRNA ribosyltransferase-isomerase"/>
    <property type="match status" value="1"/>
</dbReference>
<dbReference type="Gene3D" id="2.40.10.240">
    <property type="entry name" value="QueA-like"/>
    <property type="match status" value="1"/>
</dbReference>
<dbReference type="Gene3D" id="3.40.1780.10">
    <property type="entry name" value="QueA-like"/>
    <property type="match status" value="1"/>
</dbReference>
<dbReference type="HAMAP" id="MF_00113">
    <property type="entry name" value="QueA"/>
    <property type="match status" value="1"/>
</dbReference>
<dbReference type="InterPro" id="IPR003699">
    <property type="entry name" value="QueA"/>
</dbReference>
<dbReference type="InterPro" id="IPR042118">
    <property type="entry name" value="QueA_dom1"/>
</dbReference>
<dbReference type="InterPro" id="IPR042119">
    <property type="entry name" value="QueA_dom2"/>
</dbReference>
<dbReference type="InterPro" id="IPR036100">
    <property type="entry name" value="QueA_sf"/>
</dbReference>
<dbReference type="NCBIfam" id="NF001140">
    <property type="entry name" value="PRK00147.1"/>
    <property type="match status" value="1"/>
</dbReference>
<dbReference type="NCBIfam" id="TIGR00113">
    <property type="entry name" value="queA"/>
    <property type="match status" value="1"/>
</dbReference>
<dbReference type="PANTHER" id="PTHR30307">
    <property type="entry name" value="S-ADENOSYLMETHIONINE:TRNA RIBOSYLTRANSFERASE-ISOMERASE"/>
    <property type="match status" value="1"/>
</dbReference>
<dbReference type="PANTHER" id="PTHR30307:SF0">
    <property type="entry name" value="S-ADENOSYLMETHIONINE:TRNA RIBOSYLTRANSFERASE-ISOMERASE"/>
    <property type="match status" value="1"/>
</dbReference>
<dbReference type="Pfam" id="PF02547">
    <property type="entry name" value="Queuosine_synth"/>
    <property type="match status" value="1"/>
</dbReference>
<dbReference type="SUPFAM" id="SSF111337">
    <property type="entry name" value="QueA-like"/>
    <property type="match status" value="1"/>
</dbReference>
<comment type="function">
    <text evidence="1">Transfers and isomerizes the ribose moiety from AdoMet to the 7-aminomethyl group of 7-deazaguanine (preQ1-tRNA) to give epoxyqueuosine (oQ-tRNA).</text>
</comment>
<comment type="catalytic activity">
    <reaction evidence="1">
        <text>7-aminomethyl-7-carbaguanosine(34) in tRNA + S-adenosyl-L-methionine = epoxyqueuosine(34) in tRNA + adenine + L-methionine + 2 H(+)</text>
        <dbReference type="Rhea" id="RHEA:32155"/>
        <dbReference type="Rhea" id="RHEA-COMP:10342"/>
        <dbReference type="Rhea" id="RHEA-COMP:18582"/>
        <dbReference type="ChEBI" id="CHEBI:15378"/>
        <dbReference type="ChEBI" id="CHEBI:16708"/>
        <dbReference type="ChEBI" id="CHEBI:57844"/>
        <dbReference type="ChEBI" id="CHEBI:59789"/>
        <dbReference type="ChEBI" id="CHEBI:82833"/>
        <dbReference type="ChEBI" id="CHEBI:194443"/>
        <dbReference type="EC" id="2.4.99.17"/>
    </reaction>
</comment>
<comment type="pathway">
    <text evidence="1">tRNA modification; tRNA-queuosine biosynthesis.</text>
</comment>
<comment type="subunit">
    <text evidence="1">Monomer.</text>
</comment>
<comment type="subcellular location">
    <subcellularLocation>
        <location evidence="1">Cytoplasm</location>
    </subcellularLocation>
</comment>
<comment type="similarity">
    <text evidence="1">Belongs to the QueA family.</text>
</comment>
<evidence type="ECO:0000255" key="1">
    <source>
        <dbReference type="HAMAP-Rule" id="MF_00113"/>
    </source>
</evidence>
<keyword id="KW-0963">Cytoplasm</keyword>
<keyword id="KW-0671">Queuosine biosynthesis</keyword>
<keyword id="KW-0949">S-adenosyl-L-methionine</keyword>
<keyword id="KW-0808">Transferase</keyword>